<organism>
    <name type="scientific">Crocosphaera subtropica (strain ATCC 51142 / BH68)</name>
    <name type="common">Cyanothece sp. (strain ATCC 51142)</name>
    <dbReference type="NCBI Taxonomy" id="43989"/>
    <lineage>
        <taxon>Bacteria</taxon>
        <taxon>Bacillati</taxon>
        <taxon>Cyanobacteriota</taxon>
        <taxon>Cyanophyceae</taxon>
        <taxon>Oscillatoriophycideae</taxon>
        <taxon>Chroococcales</taxon>
        <taxon>Aphanothecaceae</taxon>
        <taxon>Crocosphaera</taxon>
        <taxon>Crocosphaera subtropica</taxon>
    </lineage>
</organism>
<reference key="1">
    <citation type="journal article" date="2008" name="Proc. Natl. Acad. Sci. U.S.A.">
        <title>The genome of Cyanothece 51142, a unicellular diazotrophic cyanobacterium important in the marine nitrogen cycle.</title>
        <authorList>
            <person name="Welsh E.A."/>
            <person name="Liberton M."/>
            <person name="Stoeckel J."/>
            <person name="Loh T."/>
            <person name="Elvitigala T."/>
            <person name="Wang C."/>
            <person name="Wollam A."/>
            <person name="Fulton R.S."/>
            <person name="Clifton S.W."/>
            <person name="Jacobs J.M."/>
            <person name="Aurora R."/>
            <person name="Ghosh B.K."/>
            <person name="Sherman L.A."/>
            <person name="Smith R.D."/>
            <person name="Wilson R.K."/>
            <person name="Pakrasi H.B."/>
        </authorList>
    </citation>
    <scope>NUCLEOTIDE SEQUENCE [LARGE SCALE GENOMIC DNA]</scope>
    <source>
        <strain>ATCC 51142 / BH68</strain>
    </source>
</reference>
<keyword id="KW-0472">Membrane</keyword>
<keyword id="KW-0520">NAD</keyword>
<keyword id="KW-0521">NADP</keyword>
<keyword id="KW-0618">Plastoquinone</keyword>
<keyword id="KW-0874">Quinone</keyword>
<keyword id="KW-1185">Reference proteome</keyword>
<keyword id="KW-0793">Thylakoid</keyword>
<keyword id="KW-1278">Translocase</keyword>
<keyword id="KW-0813">Transport</keyword>
<protein>
    <recommendedName>
        <fullName evidence="1">NAD(P)H-quinone oxidoreductase subunit J</fullName>
        <ecNumber evidence="1">7.1.1.-</ecNumber>
    </recommendedName>
    <alternativeName>
        <fullName>NAD(P)H dehydrogenase subunit J</fullName>
    </alternativeName>
    <alternativeName>
        <fullName evidence="1">NADH-plastoquinone oxidoreductase subunit J</fullName>
    </alternativeName>
    <alternativeName>
        <fullName evidence="1">NDH-1 subunit J</fullName>
        <shortName evidence="1">NDH-J</shortName>
    </alternativeName>
</protein>
<evidence type="ECO:0000255" key="1">
    <source>
        <dbReference type="HAMAP-Rule" id="MF_01357"/>
    </source>
</evidence>
<sequence>MVDENTQDNAPEQEEEAAIVQAGPVSSWLTENGFDHDLLEPDHLGVELIKVSPDFLVPLCTALYAYGFNYLQCQGAYDLGPGKELVSFYHLIKVSDNCEQAEEVRIKVFLPRDNPHIPSVYWIWKAADWQERESYDMYGIIYDGHPDLKRILMPEDWVGWPLRKDYVSPDFYELQDAY</sequence>
<accession>B1WZG0</accession>
<gene>
    <name evidence="1" type="primary">ndhJ</name>
    <name type="ordered locus">cce_1762</name>
</gene>
<dbReference type="EC" id="7.1.1.-" evidence="1"/>
<dbReference type="EMBL" id="CP000806">
    <property type="protein sequence ID" value="ACB51112.1"/>
    <property type="molecule type" value="Genomic_DNA"/>
</dbReference>
<dbReference type="RefSeq" id="WP_009545577.1">
    <property type="nucleotide sequence ID" value="NC_010546.1"/>
</dbReference>
<dbReference type="SMR" id="B1WZG0"/>
<dbReference type="STRING" id="43989.cce_1762"/>
<dbReference type="KEGG" id="cyt:cce_1762"/>
<dbReference type="eggNOG" id="COG0852">
    <property type="taxonomic scope" value="Bacteria"/>
</dbReference>
<dbReference type="HOGENOM" id="CLU_042628_9_1_3"/>
<dbReference type="OrthoDB" id="9803286at2"/>
<dbReference type="Proteomes" id="UP000001203">
    <property type="component" value="Chromosome circular"/>
</dbReference>
<dbReference type="GO" id="GO:0031676">
    <property type="term" value="C:plasma membrane-derived thylakoid membrane"/>
    <property type="evidence" value="ECO:0007669"/>
    <property type="project" value="UniProtKB-SubCell"/>
</dbReference>
<dbReference type="GO" id="GO:0008137">
    <property type="term" value="F:NADH dehydrogenase (ubiquinone) activity"/>
    <property type="evidence" value="ECO:0007669"/>
    <property type="project" value="InterPro"/>
</dbReference>
<dbReference type="GO" id="GO:0048038">
    <property type="term" value="F:quinone binding"/>
    <property type="evidence" value="ECO:0007669"/>
    <property type="project" value="UniProtKB-KW"/>
</dbReference>
<dbReference type="GO" id="GO:0019684">
    <property type="term" value="P:photosynthesis, light reaction"/>
    <property type="evidence" value="ECO:0007669"/>
    <property type="project" value="UniProtKB-UniRule"/>
</dbReference>
<dbReference type="Gene3D" id="3.30.460.80">
    <property type="entry name" value="NADH:ubiquinone oxidoreductase, 30kDa subunit"/>
    <property type="match status" value="1"/>
</dbReference>
<dbReference type="HAMAP" id="MF_01357">
    <property type="entry name" value="NDH1_NuoC"/>
    <property type="match status" value="1"/>
</dbReference>
<dbReference type="InterPro" id="IPR010218">
    <property type="entry name" value="NADH_DH_suC"/>
</dbReference>
<dbReference type="InterPro" id="IPR037232">
    <property type="entry name" value="NADH_quin_OxRdtase_su_C/D-like"/>
</dbReference>
<dbReference type="InterPro" id="IPR001268">
    <property type="entry name" value="NADH_UbQ_OxRdtase_30kDa_su"/>
</dbReference>
<dbReference type="InterPro" id="IPR020396">
    <property type="entry name" value="NADH_UbQ_OxRdtase_CS"/>
</dbReference>
<dbReference type="NCBIfam" id="NF009141">
    <property type="entry name" value="PRK12494.1"/>
    <property type="match status" value="1"/>
</dbReference>
<dbReference type="PANTHER" id="PTHR10884:SF14">
    <property type="entry name" value="NADH DEHYDROGENASE [UBIQUINONE] IRON-SULFUR PROTEIN 3, MITOCHONDRIAL"/>
    <property type="match status" value="1"/>
</dbReference>
<dbReference type="PANTHER" id="PTHR10884">
    <property type="entry name" value="NADH DEHYDROGENASE UBIQUINONE IRON-SULFUR PROTEIN 3"/>
    <property type="match status" value="1"/>
</dbReference>
<dbReference type="Pfam" id="PF00329">
    <property type="entry name" value="Complex1_30kDa"/>
    <property type="match status" value="1"/>
</dbReference>
<dbReference type="SUPFAM" id="SSF143243">
    <property type="entry name" value="Nqo5-like"/>
    <property type="match status" value="1"/>
</dbReference>
<dbReference type="PROSITE" id="PS00542">
    <property type="entry name" value="COMPLEX1_30K"/>
    <property type="match status" value="1"/>
</dbReference>
<proteinExistence type="inferred from homology"/>
<feature type="chain" id="PRO_0000358088" description="NAD(P)H-quinone oxidoreductase subunit J">
    <location>
        <begin position="1"/>
        <end position="178"/>
    </location>
</feature>
<comment type="function">
    <text evidence="1">NDH-1 shuttles electrons from an unknown electron donor, via FMN and iron-sulfur (Fe-S) centers, to quinones in the respiratory and/or the photosynthetic chain. The immediate electron acceptor for the enzyme in this species is believed to be plastoquinone. Couples the redox reaction to proton translocation, and thus conserves the redox energy in a proton gradient. Cyanobacterial NDH-1 also plays a role in inorganic carbon-concentration.</text>
</comment>
<comment type="catalytic activity">
    <reaction evidence="1">
        <text>a plastoquinone + NADH + (n+1) H(+)(in) = a plastoquinol + NAD(+) + n H(+)(out)</text>
        <dbReference type="Rhea" id="RHEA:42608"/>
        <dbReference type="Rhea" id="RHEA-COMP:9561"/>
        <dbReference type="Rhea" id="RHEA-COMP:9562"/>
        <dbReference type="ChEBI" id="CHEBI:15378"/>
        <dbReference type="ChEBI" id="CHEBI:17757"/>
        <dbReference type="ChEBI" id="CHEBI:57540"/>
        <dbReference type="ChEBI" id="CHEBI:57945"/>
        <dbReference type="ChEBI" id="CHEBI:62192"/>
    </reaction>
</comment>
<comment type="catalytic activity">
    <reaction evidence="1">
        <text>a plastoquinone + NADPH + (n+1) H(+)(in) = a plastoquinol + NADP(+) + n H(+)(out)</text>
        <dbReference type="Rhea" id="RHEA:42612"/>
        <dbReference type="Rhea" id="RHEA-COMP:9561"/>
        <dbReference type="Rhea" id="RHEA-COMP:9562"/>
        <dbReference type="ChEBI" id="CHEBI:15378"/>
        <dbReference type="ChEBI" id="CHEBI:17757"/>
        <dbReference type="ChEBI" id="CHEBI:57783"/>
        <dbReference type="ChEBI" id="CHEBI:58349"/>
        <dbReference type="ChEBI" id="CHEBI:62192"/>
    </reaction>
</comment>
<comment type="subunit">
    <text evidence="1">NDH-1 can be composed of about 15 different subunits; different subcomplexes with different compositions have been identified which probably have different functions.</text>
</comment>
<comment type="subcellular location">
    <subcellularLocation>
        <location evidence="1">Cellular thylakoid membrane</location>
        <topology evidence="1">Peripheral membrane protein</topology>
        <orientation evidence="1">Cytoplasmic side</orientation>
    </subcellularLocation>
</comment>
<comment type="similarity">
    <text evidence="1">Belongs to the complex I 30 kDa subunit family.</text>
</comment>
<name>NDHJ_CROS5</name>